<proteinExistence type="inferred from homology"/>
<accession>A3CMR4</accession>
<protein>
    <recommendedName>
        <fullName evidence="1">Putative pyruvate, phosphate dikinase regulatory protein</fullName>
        <shortName evidence="1">PPDK regulatory protein</shortName>
        <ecNumber evidence="1">2.7.11.32</ecNumber>
        <ecNumber evidence="1">2.7.4.27</ecNumber>
    </recommendedName>
</protein>
<organism>
    <name type="scientific">Streptococcus sanguinis (strain SK36)</name>
    <dbReference type="NCBI Taxonomy" id="388919"/>
    <lineage>
        <taxon>Bacteria</taxon>
        <taxon>Bacillati</taxon>
        <taxon>Bacillota</taxon>
        <taxon>Bacilli</taxon>
        <taxon>Lactobacillales</taxon>
        <taxon>Streptococcaceae</taxon>
        <taxon>Streptococcus</taxon>
    </lineage>
</organism>
<dbReference type="EC" id="2.7.11.32" evidence="1"/>
<dbReference type="EC" id="2.7.4.27" evidence="1"/>
<dbReference type="EMBL" id="CP000387">
    <property type="protein sequence ID" value="ABN44469.1"/>
    <property type="molecule type" value="Genomic_DNA"/>
</dbReference>
<dbReference type="RefSeq" id="WP_011836893.1">
    <property type="nucleotide sequence ID" value="NC_009009.1"/>
</dbReference>
<dbReference type="RefSeq" id="YP_001035019.1">
    <property type="nucleotide sequence ID" value="NC_009009.1"/>
</dbReference>
<dbReference type="SMR" id="A3CMR4"/>
<dbReference type="STRING" id="388919.SSA_1055"/>
<dbReference type="KEGG" id="ssa:SSA_1055"/>
<dbReference type="PATRIC" id="fig|388919.9.peg.1001"/>
<dbReference type="eggNOG" id="COG1806">
    <property type="taxonomic scope" value="Bacteria"/>
</dbReference>
<dbReference type="HOGENOM" id="CLU_046206_2_1_9"/>
<dbReference type="OrthoDB" id="9782201at2"/>
<dbReference type="Proteomes" id="UP000002148">
    <property type="component" value="Chromosome"/>
</dbReference>
<dbReference type="GO" id="GO:0043531">
    <property type="term" value="F:ADP binding"/>
    <property type="evidence" value="ECO:0007669"/>
    <property type="project" value="UniProtKB-UniRule"/>
</dbReference>
<dbReference type="GO" id="GO:0005524">
    <property type="term" value="F:ATP binding"/>
    <property type="evidence" value="ECO:0007669"/>
    <property type="project" value="InterPro"/>
</dbReference>
<dbReference type="GO" id="GO:0016776">
    <property type="term" value="F:phosphotransferase activity, phosphate group as acceptor"/>
    <property type="evidence" value="ECO:0007669"/>
    <property type="project" value="UniProtKB-UniRule"/>
</dbReference>
<dbReference type="GO" id="GO:0004674">
    <property type="term" value="F:protein serine/threonine kinase activity"/>
    <property type="evidence" value="ECO:0007669"/>
    <property type="project" value="UniProtKB-UniRule"/>
</dbReference>
<dbReference type="HAMAP" id="MF_00921">
    <property type="entry name" value="PDRP"/>
    <property type="match status" value="1"/>
</dbReference>
<dbReference type="InterPro" id="IPR005177">
    <property type="entry name" value="Kinase-pyrophosphorylase"/>
</dbReference>
<dbReference type="InterPro" id="IPR026565">
    <property type="entry name" value="PPDK_reg"/>
</dbReference>
<dbReference type="NCBIfam" id="NF003742">
    <property type="entry name" value="PRK05339.1"/>
    <property type="match status" value="1"/>
</dbReference>
<dbReference type="PANTHER" id="PTHR31756">
    <property type="entry name" value="PYRUVATE, PHOSPHATE DIKINASE REGULATORY PROTEIN 1, CHLOROPLASTIC"/>
    <property type="match status" value="1"/>
</dbReference>
<dbReference type="PANTHER" id="PTHR31756:SF3">
    <property type="entry name" value="PYRUVATE, PHOSPHATE DIKINASE REGULATORY PROTEIN 1, CHLOROPLASTIC"/>
    <property type="match status" value="1"/>
</dbReference>
<dbReference type="Pfam" id="PF03618">
    <property type="entry name" value="Kinase-PPPase"/>
    <property type="match status" value="1"/>
</dbReference>
<comment type="function">
    <text evidence="1">Bifunctional serine/threonine kinase and phosphorylase involved in the regulation of the pyruvate, phosphate dikinase (PPDK) by catalyzing its phosphorylation/dephosphorylation.</text>
</comment>
<comment type="catalytic activity">
    <reaction evidence="1">
        <text>N(tele)-phospho-L-histidyl/L-threonyl-[pyruvate, phosphate dikinase] + ADP = N(tele)-phospho-L-histidyl/O-phospho-L-threonyl-[pyruvate, phosphate dikinase] + AMP + H(+)</text>
        <dbReference type="Rhea" id="RHEA:43692"/>
        <dbReference type="Rhea" id="RHEA-COMP:10650"/>
        <dbReference type="Rhea" id="RHEA-COMP:10651"/>
        <dbReference type="ChEBI" id="CHEBI:15378"/>
        <dbReference type="ChEBI" id="CHEBI:30013"/>
        <dbReference type="ChEBI" id="CHEBI:61977"/>
        <dbReference type="ChEBI" id="CHEBI:83586"/>
        <dbReference type="ChEBI" id="CHEBI:456215"/>
        <dbReference type="ChEBI" id="CHEBI:456216"/>
        <dbReference type="EC" id="2.7.11.32"/>
    </reaction>
</comment>
<comment type="catalytic activity">
    <reaction evidence="1">
        <text>N(tele)-phospho-L-histidyl/O-phospho-L-threonyl-[pyruvate, phosphate dikinase] + phosphate + H(+) = N(tele)-phospho-L-histidyl/L-threonyl-[pyruvate, phosphate dikinase] + diphosphate</text>
        <dbReference type="Rhea" id="RHEA:43696"/>
        <dbReference type="Rhea" id="RHEA-COMP:10650"/>
        <dbReference type="Rhea" id="RHEA-COMP:10651"/>
        <dbReference type="ChEBI" id="CHEBI:15378"/>
        <dbReference type="ChEBI" id="CHEBI:30013"/>
        <dbReference type="ChEBI" id="CHEBI:33019"/>
        <dbReference type="ChEBI" id="CHEBI:43474"/>
        <dbReference type="ChEBI" id="CHEBI:61977"/>
        <dbReference type="ChEBI" id="CHEBI:83586"/>
        <dbReference type="EC" id="2.7.4.27"/>
    </reaction>
</comment>
<comment type="similarity">
    <text evidence="1">Belongs to the pyruvate, phosphate/water dikinase regulatory protein family. PDRP subfamily.</text>
</comment>
<sequence>MNMKKEIIVYSISDSLGGTSQKLLSAVTAQYPDIIFNNSYRFPFINKEEELLAILRDAIKDDALVISTLVDSKLAAVAREFSQANGLAYLDLMHPFFEIIREKTGTSPIEVPGTLHRLDTEYFNKISAIEFAVKYDDGKAPQGFLDSDLVLLGVSRTSKTPLSIYLANKGYKVSNLPLIPEVPLPQVLEKVDPERIIGLLCEPEKLSKIRSNRLNSLGLTQSTSYTDLEKIYEELDYSKEVFKKYRAHVINITDKSIEETAFLIEDHLKKLR</sequence>
<keyword id="KW-0418">Kinase</keyword>
<keyword id="KW-0547">Nucleotide-binding</keyword>
<keyword id="KW-1185">Reference proteome</keyword>
<keyword id="KW-0723">Serine/threonine-protein kinase</keyword>
<keyword id="KW-0808">Transferase</keyword>
<reference key="1">
    <citation type="journal article" date="2007" name="J. Bacteriol.">
        <title>Genome of the opportunistic pathogen Streptococcus sanguinis.</title>
        <authorList>
            <person name="Xu P."/>
            <person name="Alves J.M."/>
            <person name="Kitten T."/>
            <person name="Brown A."/>
            <person name="Chen Z."/>
            <person name="Ozaki L.S."/>
            <person name="Manque P."/>
            <person name="Ge X."/>
            <person name="Serrano M.G."/>
            <person name="Puiu D."/>
            <person name="Hendricks S."/>
            <person name="Wang Y."/>
            <person name="Chaplin M.D."/>
            <person name="Akan D."/>
            <person name="Paik S."/>
            <person name="Peterson D.L."/>
            <person name="Macrina F.L."/>
            <person name="Buck G.A."/>
        </authorList>
    </citation>
    <scope>NUCLEOTIDE SEQUENCE [LARGE SCALE GENOMIC DNA]</scope>
    <source>
        <strain>SK36</strain>
    </source>
</reference>
<name>PDRP_STRSV</name>
<gene>
    <name type="ordered locus">SSA_1055</name>
</gene>
<evidence type="ECO:0000255" key="1">
    <source>
        <dbReference type="HAMAP-Rule" id="MF_00921"/>
    </source>
</evidence>
<feature type="chain" id="PRO_0000316751" description="Putative pyruvate, phosphate dikinase regulatory protein">
    <location>
        <begin position="1"/>
        <end position="272"/>
    </location>
</feature>
<feature type="binding site" evidence="1">
    <location>
        <begin position="153"/>
        <end position="160"/>
    </location>
    <ligand>
        <name>ADP</name>
        <dbReference type="ChEBI" id="CHEBI:456216"/>
    </ligand>
</feature>